<dbReference type="EMBL" id="EF421425">
    <property type="protein sequence ID" value="ABO10193.1"/>
    <property type="molecule type" value="mRNA"/>
</dbReference>
<dbReference type="EMBL" id="AL953846">
    <property type="status" value="NOT_ANNOTATED_CDS"/>
    <property type="molecule type" value="Genomic_DNA"/>
</dbReference>
<dbReference type="EMBL" id="BC163020">
    <property type="protein sequence ID" value="AAI63020.1"/>
    <property type="molecule type" value="mRNA"/>
</dbReference>
<dbReference type="RefSeq" id="NP_001076326.1">
    <property type="nucleotide sequence ID" value="NM_001082857.1"/>
</dbReference>
<dbReference type="SMR" id="A3RK75"/>
<dbReference type="FunCoup" id="A3RK75">
    <property type="interactions" value="264"/>
</dbReference>
<dbReference type="STRING" id="7955.ENSDARP00000082331"/>
<dbReference type="PaxDb" id="7955-ENSDARP00000082331"/>
<dbReference type="Ensembl" id="ENSDART00000087898">
    <property type="protein sequence ID" value="ENSDARP00000082331"/>
    <property type="gene ID" value="ENSDARG00000061549"/>
</dbReference>
<dbReference type="GeneID" id="567969"/>
<dbReference type="KEGG" id="dre:567969"/>
<dbReference type="AGR" id="ZFIN:ZDB-GENE-080425-3"/>
<dbReference type="CTD" id="2311"/>
<dbReference type="ZFIN" id="ZDB-GENE-080425-3">
    <property type="gene designation" value="foxo1b"/>
</dbReference>
<dbReference type="eggNOG" id="KOG2294">
    <property type="taxonomic scope" value="Eukaryota"/>
</dbReference>
<dbReference type="HOGENOM" id="CLU_023456_1_0_1"/>
<dbReference type="InParanoid" id="A3RK75"/>
<dbReference type="OMA" id="GQYNCPT"/>
<dbReference type="OrthoDB" id="5954824at2759"/>
<dbReference type="PhylomeDB" id="A3RK75"/>
<dbReference type="TreeFam" id="TF315583"/>
<dbReference type="PRO" id="PR:A3RK75"/>
<dbReference type="Proteomes" id="UP000000437">
    <property type="component" value="Chromosome 10"/>
</dbReference>
<dbReference type="Bgee" id="ENSDARG00000061549">
    <property type="expression patterns" value="Expressed in mature ovarian follicle and 19 other cell types or tissues"/>
</dbReference>
<dbReference type="GO" id="GO:0005737">
    <property type="term" value="C:cytoplasm"/>
    <property type="evidence" value="ECO:0007669"/>
    <property type="project" value="UniProtKB-SubCell"/>
</dbReference>
<dbReference type="GO" id="GO:0005634">
    <property type="term" value="C:nucleus"/>
    <property type="evidence" value="ECO:0000318"/>
    <property type="project" value="GO_Central"/>
</dbReference>
<dbReference type="GO" id="GO:0000981">
    <property type="term" value="F:DNA-binding transcription factor activity, RNA polymerase II-specific"/>
    <property type="evidence" value="ECO:0000318"/>
    <property type="project" value="GO_Central"/>
</dbReference>
<dbReference type="GO" id="GO:0000978">
    <property type="term" value="F:RNA polymerase II cis-regulatory region sequence-specific DNA binding"/>
    <property type="evidence" value="ECO:0000318"/>
    <property type="project" value="GO_Central"/>
</dbReference>
<dbReference type="GO" id="GO:0001945">
    <property type="term" value="P:lymph vessel development"/>
    <property type="evidence" value="ECO:0000316"/>
    <property type="project" value="ZFIN"/>
</dbReference>
<dbReference type="GO" id="GO:0006357">
    <property type="term" value="P:regulation of transcription by RNA polymerase II"/>
    <property type="evidence" value="ECO:0000318"/>
    <property type="project" value="GO_Central"/>
</dbReference>
<dbReference type="CDD" id="cd20060">
    <property type="entry name" value="FH_FOXO1"/>
    <property type="match status" value="1"/>
</dbReference>
<dbReference type="FunFam" id="1.10.10.10:FF:000032">
    <property type="entry name" value="Forkhead box protein O4"/>
    <property type="match status" value="1"/>
</dbReference>
<dbReference type="Gene3D" id="1.10.10.10">
    <property type="entry name" value="Winged helix-like DNA-binding domain superfamily/Winged helix DNA-binding domain"/>
    <property type="match status" value="1"/>
</dbReference>
<dbReference type="InterPro" id="IPR047408">
    <property type="entry name" value="FH_FOXO1"/>
</dbReference>
<dbReference type="InterPro" id="IPR001766">
    <property type="entry name" value="Fork_head_dom"/>
</dbReference>
<dbReference type="InterPro" id="IPR032067">
    <property type="entry name" value="FOXO-TAD"/>
</dbReference>
<dbReference type="InterPro" id="IPR032068">
    <property type="entry name" value="FOXO_KIX-bd"/>
</dbReference>
<dbReference type="InterPro" id="IPR030456">
    <property type="entry name" value="TF_fork_head_CS_2"/>
</dbReference>
<dbReference type="InterPro" id="IPR036388">
    <property type="entry name" value="WH-like_DNA-bd_sf"/>
</dbReference>
<dbReference type="InterPro" id="IPR036390">
    <property type="entry name" value="WH_DNA-bd_sf"/>
</dbReference>
<dbReference type="PANTHER" id="PTHR45767">
    <property type="entry name" value="FORKHEAD BOX PROTEIN O"/>
    <property type="match status" value="1"/>
</dbReference>
<dbReference type="PANTHER" id="PTHR45767:SF1">
    <property type="entry name" value="FORKHEAD BOX PROTEIN O1"/>
    <property type="match status" value="1"/>
</dbReference>
<dbReference type="Pfam" id="PF00250">
    <property type="entry name" value="Forkhead"/>
    <property type="match status" value="1"/>
</dbReference>
<dbReference type="Pfam" id="PF16676">
    <property type="entry name" value="FOXO-TAD"/>
    <property type="match status" value="1"/>
</dbReference>
<dbReference type="Pfam" id="PF16675">
    <property type="entry name" value="FOXO_KIX_bdg"/>
    <property type="match status" value="1"/>
</dbReference>
<dbReference type="PRINTS" id="PR00053">
    <property type="entry name" value="FORKHEAD"/>
</dbReference>
<dbReference type="SMART" id="SM00339">
    <property type="entry name" value="FH"/>
    <property type="match status" value="1"/>
</dbReference>
<dbReference type="SUPFAM" id="SSF46785">
    <property type="entry name" value="Winged helix' DNA-binding domain"/>
    <property type="match status" value="1"/>
</dbReference>
<dbReference type="PROSITE" id="PS00658">
    <property type="entry name" value="FORK_HEAD_2"/>
    <property type="match status" value="1"/>
</dbReference>
<dbReference type="PROSITE" id="PS50039">
    <property type="entry name" value="FORK_HEAD_3"/>
    <property type="match status" value="1"/>
</dbReference>
<organism>
    <name type="scientific">Danio rerio</name>
    <name type="common">Zebrafish</name>
    <name type="synonym">Brachydanio rerio</name>
    <dbReference type="NCBI Taxonomy" id="7955"/>
    <lineage>
        <taxon>Eukaryota</taxon>
        <taxon>Metazoa</taxon>
        <taxon>Chordata</taxon>
        <taxon>Craniata</taxon>
        <taxon>Vertebrata</taxon>
        <taxon>Euteleostomi</taxon>
        <taxon>Actinopterygii</taxon>
        <taxon>Neopterygii</taxon>
        <taxon>Teleostei</taxon>
        <taxon>Ostariophysi</taxon>
        <taxon>Cypriniformes</taxon>
        <taxon>Danionidae</taxon>
        <taxon>Danioninae</taxon>
        <taxon>Danio</taxon>
    </lineage>
</organism>
<name>FX1AB_DANRE</name>
<proteinExistence type="evidence at transcript level"/>
<sequence length="629" mass="68539">MAEPQQQLVDIDPDFEPLSRPRSCTWPLHRPEFSEQPGNSNTSSPAPSVKPEQGIVDFINSLSLLEETEDYPDEKPVLLNDFHCQDNCAHPQQQHPQQPNPQLTHPQQVPPLPAPASGSSPAAAQRKSSSSRRNAWGNMSYADLITKAIESSPEKRLTLSQIYEWMVKSVPYFKDKGDSNSSAGWKNSIRHNLSLHSRFVRVQNEGTGKSSWWMLNPEGGKSGKSPRRRATSMDNNSKFTKSRGRAAKKKMSLQGGLDGGSNSPGSQYPKWLGSPNSHSNDDFEPWGNFRTRASSDASTLSGRRSPFLPEEDEAAEVHIGYPGTKLGGPLPSLSEVAGHHGSENMMDNLLENLNLISPKNNTQGSQEAQTALSSPLMQGSPGYPSYTSPNMGPQPQVQQDYRKCLYGQGGVGGLNPISIPTLSDSKPGGYGPFVGQYNCAPGLLKELLTADADPRGELMQSGEGQPVLPSYASQGQMAQGGKMITHPHLHAHPRSLHQLPSPAMGLNGCAMLPHGHPVRLSSMKPQPHLPHHTHLGRGGGEAGMPSYTNGNGFHRHGAIAHHHHSHPERLPSDLDDMLIDQLDVECDVERVLHDTLMDGDALDFNFDPMSSQQSFTHSVKTSTHNWVSG</sequence>
<feature type="chain" id="PRO_0000419247" description="Forkhead box protein O1-B">
    <location>
        <begin position="1"/>
        <end position="629"/>
    </location>
</feature>
<feature type="DNA-binding region" description="Fork-head" evidence="3">
    <location>
        <begin position="136"/>
        <end position="230"/>
    </location>
</feature>
<feature type="region of interest" description="Disordered" evidence="4">
    <location>
        <begin position="1"/>
        <end position="54"/>
    </location>
</feature>
<feature type="region of interest" description="Disordered" evidence="4">
    <location>
        <begin position="88"/>
        <end position="134"/>
    </location>
</feature>
<feature type="region of interest" description="Disordered" evidence="4">
    <location>
        <begin position="211"/>
        <end position="308"/>
    </location>
</feature>
<feature type="region of interest" description="Disordered" evidence="4">
    <location>
        <begin position="359"/>
        <end position="397"/>
    </location>
</feature>
<feature type="compositionally biased region" description="Polar residues" evidence="4">
    <location>
        <begin position="36"/>
        <end position="46"/>
    </location>
</feature>
<feature type="compositionally biased region" description="Low complexity" evidence="4">
    <location>
        <begin position="90"/>
        <end position="107"/>
    </location>
</feature>
<feature type="compositionally biased region" description="Low complexity" evidence="4">
    <location>
        <begin position="115"/>
        <end position="133"/>
    </location>
</feature>
<feature type="compositionally biased region" description="Basic residues" evidence="4">
    <location>
        <begin position="240"/>
        <end position="251"/>
    </location>
</feature>
<feature type="compositionally biased region" description="Polar residues" evidence="4">
    <location>
        <begin position="291"/>
        <end position="302"/>
    </location>
</feature>
<feature type="compositionally biased region" description="Polar residues" evidence="4">
    <location>
        <begin position="359"/>
        <end position="377"/>
    </location>
</feature>
<feature type="compositionally biased region" description="Polar residues" evidence="4">
    <location>
        <begin position="385"/>
        <end position="397"/>
    </location>
</feature>
<evidence type="ECO:0000250" key="1">
    <source>
        <dbReference type="UniProtKB" id="Q12778"/>
    </source>
</evidence>
<evidence type="ECO:0000250" key="2">
    <source>
        <dbReference type="UniProtKB" id="Q9R1E0"/>
    </source>
</evidence>
<evidence type="ECO:0000255" key="3">
    <source>
        <dbReference type="PROSITE-ProRule" id="PRU00089"/>
    </source>
</evidence>
<evidence type="ECO:0000256" key="4">
    <source>
        <dbReference type="SAM" id="MobiDB-lite"/>
    </source>
</evidence>
<evidence type="ECO:0000269" key="5">
    <source>
    </source>
</evidence>
<protein>
    <recommendedName>
        <fullName>Forkhead box protein O1-B</fullName>
    </recommendedName>
</protein>
<reference key="1">
    <citation type="journal article" date="2008" name="Hum. Mol. Genet.">
        <title>FOXC1 is required for cell viability and resistance to oxidative stress in the eye through the transcriptional regulation of FOXO1A.</title>
        <authorList>
            <person name="Berry F.B."/>
            <person name="Skarie J.M."/>
            <person name="Mirzayans F."/>
            <person name="Fortin Y."/>
            <person name="Hudson T.J."/>
            <person name="Raymond V."/>
            <person name="Link B.A."/>
            <person name="Walter M.A."/>
        </authorList>
    </citation>
    <scope>NUCLEOTIDE SEQUENCE [MRNA]</scope>
    <scope>DEVELOPMENTAL STAGE</scope>
</reference>
<reference key="2">
    <citation type="journal article" date="2013" name="Nature">
        <title>The zebrafish reference genome sequence and its relationship to the human genome.</title>
        <authorList>
            <person name="Howe K."/>
            <person name="Clark M.D."/>
            <person name="Torroja C.F."/>
            <person name="Torrance J."/>
            <person name="Berthelot C."/>
            <person name="Muffato M."/>
            <person name="Collins J.E."/>
            <person name="Humphray S."/>
            <person name="McLaren K."/>
            <person name="Matthews L."/>
            <person name="McLaren S."/>
            <person name="Sealy I."/>
            <person name="Caccamo M."/>
            <person name="Churcher C."/>
            <person name="Scott C."/>
            <person name="Barrett J.C."/>
            <person name="Koch R."/>
            <person name="Rauch G.J."/>
            <person name="White S."/>
            <person name="Chow W."/>
            <person name="Kilian B."/>
            <person name="Quintais L.T."/>
            <person name="Guerra-Assuncao J.A."/>
            <person name="Zhou Y."/>
            <person name="Gu Y."/>
            <person name="Yen J."/>
            <person name="Vogel J.H."/>
            <person name="Eyre T."/>
            <person name="Redmond S."/>
            <person name="Banerjee R."/>
            <person name="Chi J."/>
            <person name="Fu B."/>
            <person name="Langley E."/>
            <person name="Maguire S.F."/>
            <person name="Laird G.K."/>
            <person name="Lloyd D."/>
            <person name="Kenyon E."/>
            <person name="Donaldson S."/>
            <person name="Sehra H."/>
            <person name="Almeida-King J."/>
            <person name="Loveland J."/>
            <person name="Trevanion S."/>
            <person name="Jones M."/>
            <person name="Quail M."/>
            <person name="Willey D."/>
            <person name="Hunt A."/>
            <person name="Burton J."/>
            <person name="Sims S."/>
            <person name="McLay K."/>
            <person name="Plumb B."/>
            <person name="Davis J."/>
            <person name="Clee C."/>
            <person name="Oliver K."/>
            <person name="Clark R."/>
            <person name="Riddle C."/>
            <person name="Elliot D."/>
            <person name="Threadgold G."/>
            <person name="Harden G."/>
            <person name="Ware D."/>
            <person name="Begum S."/>
            <person name="Mortimore B."/>
            <person name="Kerry G."/>
            <person name="Heath P."/>
            <person name="Phillimore B."/>
            <person name="Tracey A."/>
            <person name="Corby N."/>
            <person name="Dunn M."/>
            <person name="Johnson C."/>
            <person name="Wood J."/>
            <person name="Clark S."/>
            <person name="Pelan S."/>
            <person name="Griffiths G."/>
            <person name="Smith M."/>
            <person name="Glithero R."/>
            <person name="Howden P."/>
            <person name="Barker N."/>
            <person name="Lloyd C."/>
            <person name="Stevens C."/>
            <person name="Harley J."/>
            <person name="Holt K."/>
            <person name="Panagiotidis G."/>
            <person name="Lovell J."/>
            <person name="Beasley H."/>
            <person name="Henderson C."/>
            <person name="Gordon D."/>
            <person name="Auger K."/>
            <person name="Wright D."/>
            <person name="Collins J."/>
            <person name="Raisen C."/>
            <person name="Dyer L."/>
            <person name="Leung K."/>
            <person name="Robertson L."/>
            <person name="Ambridge K."/>
            <person name="Leongamornlert D."/>
            <person name="McGuire S."/>
            <person name="Gilderthorp R."/>
            <person name="Griffiths C."/>
            <person name="Manthravadi D."/>
            <person name="Nichol S."/>
            <person name="Barker G."/>
            <person name="Whitehead S."/>
            <person name="Kay M."/>
            <person name="Brown J."/>
            <person name="Murnane C."/>
            <person name="Gray E."/>
            <person name="Humphries M."/>
            <person name="Sycamore N."/>
            <person name="Barker D."/>
            <person name="Saunders D."/>
            <person name="Wallis J."/>
            <person name="Babbage A."/>
            <person name="Hammond S."/>
            <person name="Mashreghi-Mohammadi M."/>
            <person name="Barr L."/>
            <person name="Martin S."/>
            <person name="Wray P."/>
            <person name="Ellington A."/>
            <person name="Matthews N."/>
            <person name="Ellwood M."/>
            <person name="Woodmansey R."/>
            <person name="Clark G."/>
            <person name="Cooper J."/>
            <person name="Tromans A."/>
            <person name="Grafham D."/>
            <person name="Skuce C."/>
            <person name="Pandian R."/>
            <person name="Andrews R."/>
            <person name="Harrison E."/>
            <person name="Kimberley A."/>
            <person name="Garnett J."/>
            <person name="Fosker N."/>
            <person name="Hall R."/>
            <person name="Garner P."/>
            <person name="Kelly D."/>
            <person name="Bird C."/>
            <person name="Palmer S."/>
            <person name="Gehring I."/>
            <person name="Berger A."/>
            <person name="Dooley C.M."/>
            <person name="Ersan-Urun Z."/>
            <person name="Eser C."/>
            <person name="Geiger H."/>
            <person name="Geisler M."/>
            <person name="Karotki L."/>
            <person name="Kirn A."/>
            <person name="Konantz J."/>
            <person name="Konantz M."/>
            <person name="Oberlander M."/>
            <person name="Rudolph-Geiger S."/>
            <person name="Teucke M."/>
            <person name="Lanz C."/>
            <person name="Raddatz G."/>
            <person name="Osoegawa K."/>
            <person name="Zhu B."/>
            <person name="Rapp A."/>
            <person name="Widaa S."/>
            <person name="Langford C."/>
            <person name="Yang F."/>
            <person name="Schuster S.C."/>
            <person name="Carter N.P."/>
            <person name="Harrow J."/>
            <person name="Ning Z."/>
            <person name="Herrero J."/>
            <person name="Searle S.M."/>
            <person name="Enright A."/>
            <person name="Geisler R."/>
            <person name="Plasterk R.H."/>
            <person name="Lee C."/>
            <person name="Westerfield M."/>
            <person name="de Jong P.J."/>
            <person name="Zon L.I."/>
            <person name="Postlethwait J.H."/>
            <person name="Nusslein-Volhard C."/>
            <person name="Hubbard T.J."/>
            <person name="Roest Crollius H."/>
            <person name="Rogers J."/>
            <person name="Stemple D.L."/>
        </authorList>
    </citation>
    <scope>NUCLEOTIDE SEQUENCE [LARGE SCALE GENOMIC DNA]</scope>
    <source>
        <strain>Tuebingen</strain>
    </source>
</reference>
<reference key="3">
    <citation type="submission" date="2008-04" db="EMBL/GenBank/DDBJ databases">
        <authorList>
            <consortium name="NIH - Zebrafish Gene Collection (ZGC) project"/>
        </authorList>
    </citation>
    <scope>NUCLEOTIDE SEQUENCE [LARGE SCALE MRNA]</scope>
</reference>
<accession>A3RK75</accession>
<comment type="function">
    <text evidence="1 2">Transcription factor that regulates metabolic homeostasis in response to oxidative stress (By similarity). Binds to the consensus sequence 5'-TT[G/A]TTTTG-3' and the related Daf-16 family binding element (DBE) with consensus sequence 5'-TT[G/A]TTTAC-3' (By similarity). Main regulator of redox balance and osteoblast numbers and controls bone mass. Orchestrates the endocrine function of the skeleton in regulating glucose metabolism (By similarity). May act as a positive regulator of apoptosis in cardiac smooth muscle cells as a result of its transcriptional activation of pro-apoptotic genes (By similarity).</text>
</comment>
<comment type="subcellular location">
    <subcellularLocation>
        <location evidence="2">Cytoplasm</location>
    </subcellularLocation>
    <subcellularLocation>
        <location evidence="2">Nucleus</location>
    </subcellularLocation>
    <text evidence="2">Shuttles between the cytoplasm and nucleus.</text>
</comment>
<comment type="developmental stage">
    <text evidence="5">Expressed in the developing eye. In 48h embryos, low levels in the developing eye. High levels in the branchial arch region and within the nasal epithelium. branchial arch region and in the developing pancreas.</text>
</comment>
<keyword id="KW-0963">Cytoplasm</keyword>
<keyword id="KW-0238">DNA-binding</keyword>
<keyword id="KW-0539">Nucleus</keyword>
<keyword id="KW-1185">Reference proteome</keyword>
<keyword id="KW-0804">Transcription</keyword>
<keyword id="KW-0805">Transcription regulation</keyword>
<gene>
    <name type="primary">foxo1b</name>
    <name type="synonym">foxO1a.2</name>
</gene>